<proteinExistence type="inferred from homology"/>
<evidence type="ECO:0000255" key="1">
    <source>
        <dbReference type="HAMAP-Rule" id="MF_00540"/>
    </source>
</evidence>
<feature type="chain" id="PRO_1000017703" description="Adenosine deaminase">
    <location>
        <begin position="1"/>
        <end position="331"/>
    </location>
</feature>
<feature type="active site" description="Proton donor" evidence="1">
    <location>
        <position position="200"/>
    </location>
</feature>
<feature type="binding site" evidence="1">
    <location>
        <position position="12"/>
    </location>
    <ligand>
        <name>Zn(2+)</name>
        <dbReference type="ChEBI" id="CHEBI:29105"/>
        <note>catalytic</note>
    </ligand>
</feature>
<feature type="binding site" evidence="1">
    <location>
        <position position="14"/>
    </location>
    <ligand>
        <name>substrate</name>
    </ligand>
</feature>
<feature type="binding site" evidence="1">
    <location>
        <position position="14"/>
    </location>
    <ligand>
        <name>Zn(2+)</name>
        <dbReference type="ChEBI" id="CHEBI:29105"/>
        <note>catalytic</note>
    </ligand>
</feature>
<feature type="binding site" evidence="1">
    <location>
        <position position="16"/>
    </location>
    <ligand>
        <name>substrate</name>
    </ligand>
</feature>
<feature type="binding site" evidence="1">
    <location>
        <position position="170"/>
    </location>
    <ligand>
        <name>substrate</name>
    </ligand>
</feature>
<feature type="binding site" evidence="1">
    <location>
        <position position="197"/>
    </location>
    <ligand>
        <name>Zn(2+)</name>
        <dbReference type="ChEBI" id="CHEBI:29105"/>
        <note>catalytic</note>
    </ligand>
</feature>
<feature type="binding site" evidence="1">
    <location>
        <position position="278"/>
    </location>
    <ligand>
        <name>Zn(2+)</name>
        <dbReference type="ChEBI" id="CHEBI:29105"/>
        <note>catalytic</note>
    </ligand>
</feature>
<feature type="binding site" evidence="1">
    <location>
        <position position="279"/>
    </location>
    <ligand>
        <name>substrate</name>
    </ligand>
</feature>
<feature type="site" description="Important for catalytic activity" evidence="1">
    <location>
        <position position="221"/>
    </location>
</feature>
<comment type="function">
    <text evidence="1">Catalyzes the hydrolytic deamination of adenosine and 2-deoxyadenosine.</text>
</comment>
<comment type="catalytic activity">
    <reaction evidence="1">
        <text>adenosine + H2O + H(+) = inosine + NH4(+)</text>
        <dbReference type="Rhea" id="RHEA:24408"/>
        <dbReference type="ChEBI" id="CHEBI:15377"/>
        <dbReference type="ChEBI" id="CHEBI:15378"/>
        <dbReference type="ChEBI" id="CHEBI:16335"/>
        <dbReference type="ChEBI" id="CHEBI:17596"/>
        <dbReference type="ChEBI" id="CHEBI:28938"/>
        <dbReference type="EC" id="3.5.4.4"/>
    </reaction>
    <physiologicalReaction direction="left-to-right" evidence="1">
        <dbReference type="Rhea" id="RHEA:24409"/>
    </physiologicalReaction>
</comment>
<comment type="catalytic activity">
    <reaction evidence="1">
        <text>2'-deoxyadenosine + H2O + H(+) = 2'-deoxyinosine + NH4(+)</text>
        <dbReference type="Rhea" id="RHEA:28190"/>
        <dbReference type="ChEBI" id="CHEBI:15377"/>
        <dbReference type="ChEBI" id="CHEBI:15378"/>
        <dbReference type="ChEBI" id="CHEBI:17256"/>
        <dbReference type="ChEBI" id="CHEBI:28938"/>
        <dbReference type="ChEBI" id="CHEBI:28997"/>
        <dbReference type="EC" id="3.5.4.4"/>
    </reaction>
    <physiologicalReaction direction="left-to-right" evidence="1">
        <dbReference type="Rhea" id="RHEA:28191"/>
    </physiologicalReaction>
</comment>
<comment type="cofactor">
    <cofactor evidence="1">
        <name>Zn(2+)</name>
        <dbReference type="ChEBI" id="CHEBI:29105"/>
    </cofactor>
    <text evidence="1">Binds 1 zinc ion per subunit.</text>
</comment>
<comment type="similarity">
    <text evidence="1">Belongs to the metallo-dependent hydrolases superfamily. Adenosine and AMP deaminases family. Adenosine deaminase subfamily.</text>
</comment>
<dbReference type="EC" id="3.5.4.4" evidence="1"/>
<dbReference type="EMBL" id="CP000503">
    <property type="protein sequence ID" value="ABM22891.1"/>
    <property type="molecule type" value="Genomic_DNA"/>
</dbReference>
<dbReference type="RefSeq" id="WP_011787459.1">
    <property type="nucleotide sequence ID" value="NC_008750.1"/>
</dbReference>
<dbReference type="SMR" id="A1RDZ6"/>
<dbReference type="GeneID" id="67441633"/>
<dbReference type="KEGG" id="shw:Sputw3181_0038"/>
<dbReference type="HOGENOM" id="CLU_039228_0_2_6"/>
<dbReference type="Proteomes" id="UP000002597">
    <property type="component" value="Chromosome"/>
</dbReference>
<dbReference type="GO" id="GO:0005829">
    <property type="term" value="C:cytosol"/>
    <property type="evidence" value="ECO:0007669"/>
    <property type="project" value="TreeGrafter"/>
</dbReference>
<dbReference type="GO" id="GO:0046936">
    <property type="term" value="F:2'-deoxyadenosine deaminase activity"/>
    <property type="evidence" value="ECO:0007669"/>
    <property type="project" value="RHEA"/>
</dbReference>
<dbReference type="GO" id="GO:0004000">
    <property type="term" value="F:adenosine deaminase activity"/>
    <property type="evidence" value="ECO:0007669"/>
    <property type="project" value="UniProtKB-UniRule"/>
</dbReference>
<dbReference type="GO" id="GO:0008270">
    <property type="term" value="F:zinc ion binding"/>
    <property type="evidence" value="ECO:0007669"/>
    <property type="project" value="UniProtKB-UniRule"/>
</dbReference>
<dbReference type="GO" id="GO:0006154">
    <property type="term" value="P:adenosine catabolic process"/>
    <property type="evidence" value="ECO:0007669"/>
    <property type="project" value="TreeGrafter"/>
</dbReference>
<dbReference type="GO" id="GO:0043103">
    <property type="term" value="P:hypoxanthine salvage"/>
    <property type="evidence" value="ECO:0007669"/>
    <property type="project" value="TreeGrafter"/>
</dbReference>
<dbReference type="GO" id="GO:0046103">
    <property type="term" value="P:inosine biosynthetic process"/>
    <property type="evidence" value="ECO:0007669"/>
    <property type="project" value="TreeGrafter"/>
</dbReference>
<dbReference type="GO" id="GO:0009117">
    <property type="term" value="P:nucleotide metabolic process"/>
    <property type="evidence" value="ECO:0007669"/>
    <property type="project" value="UniProtKB-KW"/>
</dbReference>
<dbReference type="GO" id="GO:0009168">
    <property type="term" value="P:purine ribonucleoside monophosphate biosynthetic process"/>
    <property type="evidence" value="ECO:0007669"/>
    <property type="project" value="UniProtKB-UniRule"/>
</dbReference>
<dbReference type="FunFam" id="3.20.20.140:FF:000009">
    <property type="entry name" value="Adenosine deaminase"/>
    <property type="match status" value="1"/>
</dbReference>
<dbReference type="Gene3D" id="3.20.20.140">
    <property type="entry name" value="Metal-dependent hydrolases"/>
    <property type="match status" value="1"/>
</dbReference>
<dbReference type="HAMAP" id="MF_00540">
    <property type="entry name" value="A_deaminase"/>
    <property type="match status" value="1"/>
</dbReference>
<dbReference type="InterPro" id="IPR006650">
    <property type="entry name" value="A/AMP_deam_AS"/>
</dbReference>
<dbReference type="InterPro" id="IPR028893">
    <property type="entry name" value="A_deaminase"/>
</dbReference>
<dbReference type="InterPro" id="IPR001365">
    <property type="entry name" value="A_deaminase_dom"/>
</dbReference>
<dbReference type="InterPro" id="IPR006330">
    <property type="entry name" value="Ado/ade_deaminase"/>
</dbReference>
<dbReference type="InterPro" id="IPR032466">
    <property type="entry name" value="Metal_Hydrolase"/>
</dbReference>
<dbReference type="NCBIfam" id="TIGR01430">
    <property type="entry name" value="aden_deam"/>
    <property type="match status" value="1"/>
</dbReference>
<dbReference type="NCBIfam" id="NF006846">
    <property type="entry name" value="PRK09358.1-1"/>
    <property type="match status" value="1"/>
</dbReference>
<dbReference type="PANTHER" id="PTHR11409">
    <property type="entry name" value="ADENOSINE DEAMINASE"/>
    <property type="match status" value="1"/>
</dbReference>
<dbReference type="PANTHER" id="PTHR11409:SF43">
    <property type="entry name" value="ADENOSINE DEAMINASE"/>
    <property type="match status" value="1"/>
</dbReference>
<dbReference type="Pfam" id="PF00962">
    <property type="entry name" value="A_deaminase"/>
    <property type="match status" value="1"/>
</dbReference>
<dbReference type="SUPFAM" id="SSF51556">
    <property type="entry name" value="Metallo-dependent hydrolases"/>
    <property type="match status" value="1"/>
</dbReference>
<dbReference type="PROSITE" id="PS00485">
    <property type="entry name" value="A_DEAMINASE"/>
    <property type="match status" value="1"/>
</dbReference>
<gene>
    <name evidence="1" type="primary">add</name>
    <name type="ordered locus">Sputw3181_0038</name>
</gene>
<organism>
    <name type="scientific">Shewanella sp. (strain W3-18-1)</name>
    <dbReference type="NCBI Taxonomy" id="351745"/>
    <lineage>
        <taxon>Bacteria</taxon>
        <taxon>Pseudomonadati</taxon>
        <taxon>Pseudomonadota</taxon>
        <taxon>Gammaproteobacteria</taxon>
        <taxon>Alteromonadales</taxon>
        <taxon>Shewanellaceae</taxon>
        <taxon>Shewanella</taxon>
    </lineage>
</organism>
<keyword id="KW-0378">Hydrolase</keyword>
<keyword id="KW-0479">Metal-binding</keyword>
<keyword id="KW-0546">Nucleotide metabolism</keyword>
<keyword id="KW-0862">Zinc</keyword>
<reference key="1">
    <citation type="submission" date="2006-12" db="EMBL/GenBank/DDBJ databases">
        <title>Complete sequence of Shewanella sp. W3-18-1.</title>
        <authorList>
            <consortium name="US DOE Joint Genome Institute"/>
            <person name="Copeland A."/>
            <person name="Lucas S."/>
            <person name="Lapidus A."/>
            <person name="Barry K."/>
            <person name="Detter J.C."/>
            <person name="Glavina del Rio T."/>
            <person name="Hammon N."/>
            <person name="Israni S."/>
            <person name="Dalin E."/>
            <person name="Tice H."/>
            <person name="Pitluck S."/>
            <person name="Chain P."/>
            <person name="Malfatti S."/>
            <person name="Shin M."/>
            <person name="Vergez L."/>
            <person name="Schmutz J."/>
            <person name="Larimer F."/>
            <person name="Land M."/>
            <person name="Hauser L."/>
            <person name="Kyrpides N."/>
            <person name="Lykidis A."/>
            <person name="Tiedje J."/>
            <person name="Richardson P."/>
        </authorList>
    </citation>
    <scope>NUCLEOTIDE SEQUENCE [LARGE SCALE GENOMIC DNA]</scope>
    <source>
        <strain>W3-18-1</strain>
    </source>
</reference>
<protein>
    <recommendedName>
        <fullName evidence="1">Adenosine deaminase</fullName>
        <ecNumber evidence="1">3.5.4.4</ecNumber>
    </recommendedName>
    <alternativeName>
        <fullName evidence="1">Adenosine aminohydrolase</fullName>
    </alternativeName>
</protein>
<name>ADD_SHESW</name>
<sequence length="331" mass="36217">MIDTSIPLVDLHRHLDGNVRVNTIWELGHQHGIALPADSLETLAPFVQIQGKETSLVAFLKKLDWMVAVLADLDAVKRVAYENVADAALSGLDYAELRFSPYYMAMNHKLPIEGVVEAVVDGVKAGLKDYNVKINLIGIMSRSFGQAACTQELEGLLAHKQHLVAMDLAGDELGFPGELFNDHFKRVRDAGLAITAHAGEAAGSQSMWQAIQELGATRIGHGVNAIHDPRLMEYLAKHRIGIESCPTSNLHTSTVVSYAEHPFRTFMDAGVLISLNTDDPGVSAIDIKHEYRIAKSELKLTDAELAQVQRNGVEMAFLSDSERKALYAAKV</sequence>
<accession>A1RDZ6</accession>